<gene>
    <name evidence="1" type="primary">mnmG</name>
    <name evidence="1" type="synonym">gidA</name>
    <name type="ordered locus">Tbd_2808</name>
</gene>
<reference key="1">
    <citation type="journal article" date="2006" name="J. Bacteriol.">
        <title>The genome sequence of the obligately chemolithoautotrophic, facultatively anaerobic bacterium Thiobacillus denitrificans.</title>
        <authorList>
            <person name="Beller H.R."/>
            <person name="Chain P.S."/>
            <person name="Letain T.E."/>
            <person name="Chakicherla A."/>
            <person name="Larimer F.W."/>
            <person name="Richardson P.M."/>
            <person name="Coleman M.A."/>
            <person name="Wood A.P."/>
            <person name="Kelly D.P."/>
        </authorList>
    </citation>
    <scope>NUCLEOTIDE SEQUENCE [LARGE SCALE GENOMIC DNA]</scope>
    <source>
        <strain>ATCC 25259 / T1</strain>
    </source>
</reference>
<evidence type="ECO:0000255" key="1">
    <source>
        <dbReference type="HAMAP-Rule" id="MF_00129"/>
    </source>
</evidence>
<keyword id="KW-0963">Cytoplasm</keyword>
<keyword id="KW-0274">FAD</keyword>
<keyword id="KW-0285">Flavoprotein</keyword>
<keyword id="KW-0520">NAD</keyword>
<keyword id="KW-1185">Reference proteome</keyword>
<keyword id="KW-0819">tRNA processing</keyword>
<feature type="chain" id="PRO_1000016705" description="tRNA uridine 5-carboxymethylaminomethyl modification enzyme MnmG">
    <location>
        <begin position="1"/>
        <end position="632"/>
    </location>
</feature>
<feature type="binding site" evidence="1">
    <location>
        <begin position="13"/>
        <end position="18"/>
    </location>
    <ligand>
        <name>FAD</name>
        <dbReference type="ChEBI" id="CHEBI:57692"/>
    </ligand>
</feature>
<feature type="binding site" evidence="1">
    <location>
        <begin position="273"/>
        <end position="287"/>
    </location>
    <ligand>
        <name>NAD(+)</name>
        <dbReference type="ChEBI" id="CHEBI:57540"/>
    </ligand>
</feature>
<name>MNMG_THIDA</name>
<sequence length="632" mass="68746">MKFPESFDVIVVGGGHAGTEAALAAARMGAKTLLLTHNIETLGAMSCNPSIGGIGKGHLVREVDALGGAMALATDEAGIQFRTLNSSKGPAVRATRAQADRVLYKAAIRQRLENQPGLTLFQQAVDDLVLDGARVVGVKTQLGILFEARAVVLTAGTFLAGLVHVGLENFQAGRMGDPPAVSLAARLRELDLPVGRLKTGTPPRIDGRTIDYSRTQVQPGDDPAPVFSFMGDRSMHPAQRPCWITHTTVATHEIIRGGLDRSPLYAGVIEGVGPRYCPSIEDKITRFADKASHQIFLEPEGLTTHEIYPNGISTSLPFDVQHAIVRSIPGLEHAHILRPGYAIEYDYYDPRNLKASLETKSIAGLFFAGQINGTTGYEEAAAQGLLAGLNAALQTQGKDAWSPGRHEAYLGVLVDDLITRGVSEPYRMFTSRAEYRLQLREDNADMRLTETGRALGVVDDARWDQFNRKRDEVARETERLKSVWVNPAILPADAATQLIGQPIEREYSLFDLLRRPNLGYAQVLALPGGGAGVADVGVAEQVEIAAKYQGYIDRQNEEVDKHREQEGLRLPPDLDYTRLTGLSMEVRQRLQTAQPETLGQASRLQGVTPAAISVLLVYAKRGFKPDEQKKSA</sequence>
<dbReference type="EMBL" id="CP000116">
    <property type="protein sequence ID" value="AAZ98761.1"/>
    <property type="molecule type" value="Genomic_DNA"/>
</dbReference>
<dbReference type="RefSeq" id="WP_011313320.1">
    <property type="nucleotide sequence ID" value="NC_007404.1"/>
</dbReference>
<dbReference type="SMR" id="Q3SF55"/>
<dbReference type="STRING" id="292415.Tbd_2808"/>
<dbReference type="KEGG" id="tbd:Tbd_2808"/>
<dbReference type="eggNOG" id="COG0445">
    <property type="taxonomic scope" value="Bacteria"/>
</dbReference>
<dbReference type="HOGENOM" id="CLU_007831_2_2_4"/>
<dbReference type="OrthoDB" id="9815560at2"/>
<dbReference type="Proteomes" id="UP000008291">
    <property type="component" value="Chromosome"/>
</dbReference>
<dbReference type="GO" id="GO:0005829">
    <property type="term" value="C:cytosol"/>
    <property type="evidence" value="ECO:0007669"/>
    <property type="project" value="TreeGrafter"/>
</dbReference>
<dbReference type="GO" id="GO:0050660">
    <property type="term" value="F:flavin adenine dinucleotide binding"/>
    <property type="evidence" value="ECO:0007669"/>
    <property type="project" value="UniProtKB-UniRule"/>
</dbReference>
<dbReference type="GO" id="GO:0030488">
    <property type="term" value="P:tRNA methylation"/>
    <property type="evidence" value="ECO:0007669"/>
    <property type="project" value="TreeGrafter"/>
</dbReference>
<dbReference type="GO" id="GO:0002098">
    <property type="term" value="P:tRNA wobble uridine modification"/>
    <property type="evidence" value="ECO:0007669"/>
    <property type="project" value="InterPro"/>
</dbReference>
<dbReference type="FunFam" id="1.10.10.1800:FF:000001">
    <property type="entry name" value="tRNA uridine 5-carboxymethylaminomethyl modification enzyme MnmG"/>
    <property type="match status" value="1"/>
</dbReference>
<dbReference type="FunFam" id="1.10.150.570:FF:000001">
    <property type="entry name" value="tRNA uridine 5-carboxymethylaminomethyl modification enzyme MnmG"/>
    <property type="match status" value="1"/>
</dbReference>
<dbReference type="FunFam" id="3.50.50.60:FF:000002">
    <property type="entry name" value="tRNA uridine 5-carboxymethylaminomethyl modification enzyme MnmG"/>
    <property type="match status" value="1"/>
</dbReference>
<dbReference type="FunFam" id="3.50.50.60:FF:000010">
    <property type="entry name" value="tRNA uridine 5-carboxymethylaminomethyl modification enzyme MnmG"/>
    <property type="match status" value="1"/>
</dbReference>
<dbReference type="Gene3D" id="3.50.50.60">
    <property type="entry name" value="FAD/NAD(P)-binding domain"/>
    <property type="match status" value="2"/>
</dbReference>
<dbReference type="Gene3D" id="1.10.150.570">
    <property type="entry name" value="GidA associated domain, C-terminal subdomain"/>
    <property type="match status" value="1"/>
</dbReference>
<dbReference type="Gene3D" id="1.10.10.1800">
    <property type="entry name" value="tRNA uridine 5-carboxymethylaminomethyl modification enzyme MnmG/GidA"/>
    <property type="match status" value="1"/>
</dbReference>
<dbReference type="HAMAP" id="MF_00129">
    <property type="entry name" value="MnmG_GidA"/>
    <property type="match status" value="1"/>
</dbReference>
<dbReference type="InterPro" id="IPR036188">
    <property type="entry name" value="FAD/NAD-bd_sf"/>
</dbReference>
<dbReference type="InterPro" id="IPR049312">
    <property type="entry name" value="GIDA_C_N"/>
</dbReference>
<dbReference type="InterPro" id="IPR004416">
    <property type="entry name" value="MnmG"/>
</dbReference>
<dbReference type="InterPro" id="IPR002218">
    <property type="entry name" value="MnmG-rel"/>
</dbReference>
<dbReference type="InterPro" id="IPR020595">
    <property type="entry name" value="MnmG-rel_CS"/>
</dbReference>
<dbReference type="InterPro" id="IPR026904">
    <property type="entry name" value="MnmG_C"/>
</dbReference>
<dbReference type="InterPro" id="IPR047001">
    <property type="entry name" value="MnmG_C_subdom"/>
</dbReference>
<dbReference type="InterPro" id="IPR044920">
    <property type="entry name" value="MnmG_C_subdom_sf"/>
</dbReference>
<dbReference type="InterPro" id="IPR040131">
    <property type="entry name" value="MnmG_N"/>
</dbReference>
<dbReference type="NCBIfam" id="TIGR00136">
    <property type="entry name" value="mnmG_gidA"/>
    <property type="match status" value="1"/>
</dbReference>
<dbReference type="PANTHER" id="PTHR11806">
    <property type="entry name" value="GLUCOSE INHIBITED DIVISION PROTEIN A"/>
    <property type="match status" value="1"/>
</dbReference>
<dbReference type="PANTHER" id="PTHR11806:SF0">
    <property type="entry name" value="PROTEIN MTO1 HOMOLOG, MITOCHONDRIAL"/>
    <property type="match status" value="1"/>
</dbReference>
<dbReference type="Pfam" id="PF01134">
    <property type="entry name" value="GIDA"/>
    <property type="match status" value="1"/>
</dbReference>
<dbReference type="Pfam" id="PF21680">
    <property type="entry name" value="GIDA_C_1st"/>
    <property type="match status" value="1"/>
</dbReference>
<dbReference type="Pfam" id="PF13932">
    <property type="entry name" value="SAM_GIDA_C"/>
    <property type="match status" value="1"/>
</dbReference>
<dbReference type="SMART" id="SM01228">
    <property type="entry name" value="GIDA_assoc_3"/>
    <property type="match status" value="1"/>
</dbReference>
<dbReference type="SUPFAM" id="SSF51905">
    <property type="entry name" value="FAD/NAD(P)-binding domain"/>
    <property type="match status" value="1"/>
</dbReference>
<dbReference type="PROSITE" id="PS01280">
    <property type="entry name" value="GIDA_1"/>
    <property type="match status" value="1"/>
</dbReference>
<dbReference type="PROSITE" id="PS01281">
    <property type="entry name" value="GIDA_2"/>
    <property type="match status" value="1"/>
</dbReference>
<protein>
    <recommendedName>
        <fullName evidence="1">tRNA uridine 5-carboxymethylaminomethyl modification enzyme MnmG</fullName>
    </recommendedName>
    <alternativeName>
        <fullName evidence="1">Glucose-inhibited division protein A</fullName>
    </alternativeName>
</protein>
<comment type="function">
    <text evidence="1">NAD-binding protein involved in the addition of a carboxymethylaminomethyl (cmnm) group at the wobble position (U34) of certain tRNAs, forming tRNA-cmnm(5)s(2)U34.</text>
</comment>
<comment type="cofactor">
    <cofactor evidence="1">
        <name>FAD</name>
        <dbReference type="ChEBI" id="CHEBI:57692"/>
    </cofactor>
</comment>
<comment type="subunit">
    <text evidence="1">Homodimer. Heterotetramer of two MnmE and two MnmG subunits.</text>
</comment>
<comment type="subcellular location">
    <subcellularLocation>
        <location evidence="1">Cytoplasm</location>
    </subcellularLocation>
</comment>
<comment type="similarity">
    <text evidence="1">Belongs to the MnmG family.</text>
</comment>
<accession>Q3SF55</accession>
<proteinExistence type="inferred from homology"/>
<organism>
    <name type="scientific">Thiobacillus denitrificans (strain ATCC 25259 / T1)</name>
    <dbReference type="NCBI Taxonomy" id="292415"/>
    <lineage>
        <taxon>Bacteria</taxon>
        <taxon>Pseudomonadati</taxon>
        <taxon>Pseudomonadota</taxon>
        <taxon>Betaproteobacteria</taxon>
        <taxon>Nitrosomonadales</taxon>
        <taxon>Thiobacillaceae</taxon>
        <taxon>Thiobacillus</taxon>
    </lineage>
</organism>